<reference key="1">
    <citation type="journal article" date="2005" name="Science">
        <title>The genome of the basidiomycetous yeast and human pathogen Cryptococcus neoformans.</title>
        <authorList>
            <person name="Loftus B.J."/>
            <person name="Fung E."/>
            <person name="Roncaglia P."/>
            <person name="Rowley D."/>
            <person name="Amedeo P."/>
            <person name="Bruno D."/>
            <person name="Vamathevan J."/>
            <person name="Miranda M."/>
            <person name="Anderson I.J."/>
            <person name="Fraser J.A."/>
            <person name="Allen J.E."/>
            <person name="Bosdet I.E."/>
            <person name="Brent M.R."/>
            <person name="Chiu R."/>
            <person name="Doering T.L."/>
            <person name="Donlin M.J."/>
            <person name="D'Souza C.A."/>
            <person name="Fox D.S."/>
            <person name="Grinberg V."/>
            <person name="Fu J."/>
            <person name="Fukushima M."/>
            <person name="Haas B.J."/>
            <person name="Huang J.C."/>
            <person name="Janbon G."/>
            <person name="Jones S.J.M."/>
            <person name="Koo H.L."/>
            <person name="Krzywinski M.I."/>
            <person name="Kwon-Chung K.J."/>
            <person name="Lengeler K.B."/>
            <person name="Maiti R."/>
            <person name="Marra M.A."/>
            <person name="Marra R.E."/>
            <person name="Mathewson C.A."/>
            <person name="Mitchell T.G."/>
            <person name="Pertea M."/>
            <person name="Riggs F.R."/>
            <person name="Salzberg S.L."/>
            <person name="Schein J.E."/>
            <person name="Shvartsbeyn A."/>
            <person name="Shin H."/>
            <person name="Shumway M."/>
            <person name="Specht C.A."/>
            <person name="Suh B.B."/>
            <person name="Tenney A."/>
            <person name="Utterback T.R."/>
            <person name="Wickes B.L."/>
            <person name="Wortman J.R."/>
            <person name="Wye N.H."/>
            <person name="Kronstad J.W."/>
            <person name="Lodge J.K."/>
            <person name="Heitman J."/>
            <person name="Davis R.W."/>
            <person name="Fraser C.M."/>
            <person name="Hyman R.W."/>
        </authorList>
    </citation>
    <scope>NUCLEOTIDE SEQUENCE [LARGE SCALE GENOMIC DNA]</scope>
    <source>
        <strain>JEC21 / ATCC MYA-565</strain>
    </source>
</reference>
<name>SEY1_CRYNJ</name>
<protein>
    <recommendedName>
        <fullName evidence="1">Protein SEY1</fullName>
        <ecNumber evidence="1">3.6.5.-</ecNumber>
    </recommendedName>
</protein>
<keyword id="KW-0175">Coiled coil</keyword>
<keyword id="KW-0256">Endoplasmic reticulum</keyword>
<keyword id="KW-0342">GTP-binding</keyword>
<keyword id="KW-0378">Hydrolase</keyword>
<keyword id="KW-0472">Membrane</keyword>
<keyword id="KW-0547">Nucleotide-binding</keyword>
<keyword id="KW-1185">Reference proteome</keyword>
<keyword id="KW-0812">Transmembrane</keyword>
<keyword id="KW-1133">Transmembrane helix</keyword>
<organism>
    <name type="scientific">Cryptococcus neoformans var. neoformans serotype D (strain JEC21 / ATCC MYA-565)</name>
    <name type="common">Filobasidiella neoformans</name>
    <dbReference type="NCBI Taxonomy" id="214684"/>
    <lineage>
        <taxon>Eukaryota</taxon>
        <taxon>Fungi</taxon>
        <taxon>Dikarya</taxon>
        <taxon>Basidiomycota</taxon>
        <taxon>Agaricomycotina</taxon>
        <taxon>Tremellomycetes</taxon>
        <taxon>Tremellales</taxon>
        <taxon>Cryptococcaceae</taxon>
        <taxon>Cryptococcus</taxon>
        <taxon>Cryptococcus neoformans species complex</taxon>
    </lineage>
</organism>
<accession>P0CQ46</accession>
<accession>Q55M25</accession>
<accession>Q5K8P4</accession>
<gene>
    <name evidence="1" type="primary">SEY1</name>
    <name type="ordered locus">CNL04960</name>
</gene>
<sequence>MNQTPQIAQDLLKNPPQELQQLLNDPRTPDSARKAVQELQAPFVGPGTAGNKDGAKESPRLQIVNENQEFTKELSPYLAKWDLLDKGFAYDVVAVFGSQSTGKSTLLNRLFGTTFDVMDESKRQQTTKGIWMCPSQYSNTLVMDVEGTDGRERGEDQDFERKSALFSLASTEVLIVNLWEHQIGLYNGANMGLLKTVFEVNLGLFGGGGDNTKPKPQEKTLILFVIRDHVGATPMSNLTATLTQDMERIWDSLSKPAHLEDAVLSSYFDLSFAALPHKVLMPEKFEEAVLELRQRFTDRSREDYVFQPAYHKRIPADGVSFYMEGIWQQVLTNKDLDLPTQQELLAQFRCDEISTVVFEAFLASAKIVRRPVEAGSVVEGLGALMRDWLETALGKFDRDASRYHSAVYQRKRLDLLASLHASLSPLFLGQLKNLHKIETAKFSKDIVAGVKEPGYDFGVVVEEGKRRARERFLAGAKEVKVEETDWEYEHELALLDEDLKLIADKCRADETKKMVNAIERNVKRQILEPVEVAMSQPTKTMWDTVLKTYSDVIEAAEEAYLSKAKSYNCSDEENSTALASLRARAWLALRRKLEEQTSDSTVLTTLRTKFEDSFRYDEAGVPRVWRPEDDIEAAFRKAKDETLGLLPLFANIAPTEGSLLPELPPPEPSFDVESDPSPFDPSTAFTLLTATKLLSLESRFKRDADAAYVEAKRSMVSSVAQIPVWMYGVLVVLGWNEAMAVLFNPLYFAMLLVLAASGYIILQLGLAGPILQIASTVIREIRQMVVKKLREAFADVPEAQRILAQPVTASSSDEQERKGDLIKGEMLEK</sequence>
<comment type="function">
    <text evidence="1">Cooperates with the reticulon proteins and tubule-shaping DP1 family proteins to generate and maintain the structure of the tubular endoplasmic reticulum network. Has GTPase activity, which is required for its function in ER organization.</text>
</comment>
<comment type="subcellular location">
    <subcellularLocation>
        <location evidence="1">Endoplasmic reticulum membrane</location>
        <topology evidence="1">Multi-pass membrane protein</topology>
    </subcellularLocation>
    <text evidence="1">Enriched in the cortical ER. Concentrated in punctae along the ER tubules.</text>
</comment>
<comment type="similarity">
    <text evidence="2">Belongs to the TRAFAC class dynamin-like GTPase superfamily. GB1/RHD3 GTPase family. RHD3 subfamily.</text>
</comment>
<feature type="chain" id="PRO_0000155131" description="Protein SEY1">
    <location>
        <begin position="1"/>
        <end position="829"/>
    </location>
</feature>
<feature type="topological domain" description="Cytoplasmic" evidence="1">
    <location>
        <begin position="1"/>
        <end position="721"/>
    </location>
</feature>
<feature type="transmembrane region" description="Helical" evidence="1">
    <location>
        <begin position="722"/>
        <end position="742"/>
    </location>
</feature>
<feature type="topological domain" description="Lumenal" evidence="1">
    <location>
        <begin position="743"/>
        <end position="745"/>
    </location>
</feature>
<feature type="transmembrane region" description="Helical" evidence="1">
    <location>
        <begin position="746"/>
        <end position="766"/>
    </location>
</feature>
<feature type="topological domain" description="Cytoplasmic" evidence="1">
    <location>
        <begin position="767"/>
        <end position="829"/>
    </location>
</feature>
<feature type="domain" description="GB1/RHD3-type G" evidence="2">
    <location>
        <begin position="87"/>
        <end position="310"/>
    </location>
</feature>
<feature type="region of interest" description="Disordered" evidence="3">
    <location>
        <begin position="806"/>
        <end position="829"/>
    </location>
</feature>
<feature type="coiled-coil region" evidence="1">
    <location>
        <begin position="487"/>
        <end position="525"/>
    </location>
</feature>
<feature type="compositionally biased region" description="Basic and acidic residues" evidence="3">
    <location>
        <begin position="814"/>
        <end position="829"/>
    </location>
</feature>
<feature type="binding site" evidence="1">
    <location>
        <begin position="97"/>
        <end position="104"/>
    </location>
    <ligand>
        <name>GTP</name>
        <dbReference type="ChEBI" id="CHEBI:37565"/>
    </ligand>
</feature>
<dbReference type="EC" id="3.6.5.-" evidence="1"/>
<dbReference type="EMBL" id="AE017352">
    <property type="protein sequence ID" value="AAW46519.1"/>
    <property type="molecule type" value="Genomic_DNA"/>
</dbReference>
<dbReference type="RefSeq" id="XP_568036.1">
    <property type="nucleotide sequence ID" value="XM_568036.1"/>
</dbReference>
<dbReference type="SMR" id="P0CQ46"/>
<dbReference type="FunCoup" id="P0CQ46">
    <property type="interactions" value="130"/>
</dbReference>
<dbReference type="STRING" id="214684.P0CQ46"/>
<dbReference type="PaxDb" id="214684-P0CQ46"/>
<dbReference type="EnsemblFungi" id="AAW46519">
    <property type="protein sequence ID" value="AAW46519"/>
    <property type="gene ID" value="CNL04960"/>
</dbReference>
<dbReference type="GeneID" id="3254914"/>
<dbReference type="KEGG" id="cne:CNL04960"/>
<dbReference type="VEuPathDB" id="FungiDB:CNL04960"/>
<dbReference type="eggNOG" id="KOG2203">
    <property type="taxonomic scope" value="Eukaryota"/>
</dbReference>
<dbReference type="HOGENOM" id="CLU_011270_0_0_1"/>
<dbReference type="InParanoid" id="P0CQ46"/>
<dbReference type="OMA" id="PIIKMTE"/>
<dbReference type="OrthoDB" id="1597724at2759"/>
<dbReference type="Proteomes" id="UP000002149">
    <property type="component" value="Chromosome 12"/>
</dbReference>
<dbReference type="GO" id="GO:0005783">
    <property type="term" value="C:endoplasmic reticulum"/>
    <property type="evidence" value="ECO:0000318"/>
    <property type="project" value="GO_Central"/>
</dbReference>
<dbReference type="GO" id="GO:0005789">
    <property type="term" value="C:endoplasmic reticulum membrane"/>
    <property type="evidence" value="ECO:0007669"/>
    <property type="project" value="UniProtKB-SubCell"/>
</dbReference>
<dbReference type="GO" id="GO:0005525">
    <property type="term" value="F:GTP binding"/>
    <property type="evidence" value="ECO:0007669"/>
    <property type="project" value="UniProtKB-UniRule"/>
</dbReference>
<dbReference type="GO" id="GO:0003924">
    <property type="term" value="F:GTPase activity"/>
    <property type="evidence" value="ECO:0000318"/>
    <property type="project" value="GO_Central"/>
</dbReference>
<dbReference type="GO" id="GO:0016320">
    <property type="term" value="P:endoplasmic reticulum membrane fusion"/>
    <property type="evidence" value="ECO:0000318"/>
    <property type="project" value="GO_Central"/>
</dbReference>
<dbReference type="CDD" id="cd01851">
    <property type="entry name" value="GBP"/>
    <property type="match status" value="1"/>
</dbReference>
<dbReference type="FunFam" id="3.40.50.300:FF:000727">
    <property type="entry name" value="Protein SEY1 homolog"/>
    <property type="match status" value="1"/>
</dbReference>
<dbReference type="Gene3D" id="3.40.50.300">
    <property type="entry name" value="P-loop containing nucleotide triphosphate hydrolases"/>
    <property type="match status" value="1"/>
</dbReference>
<dbReference type="HAMAP" id="MF_03109">
    <property type="entry name" value="Sey1"/>
    <property type="match status" value="1"/>
</dbReference>
<dbReference type="InterPro" id="IPR030386">
    <property type="entry name" value="G_GB1_RHD3_dom"/>
</dbReference>
<dbReference type="InterPro" id="IPR027417">
    <property type="entry name" value="P-loop_NTPase"/>
</dbReference>
<dbReference type="InterPro" id="IPR008803">
    <property type="entry name" value="RHD3/Sey1"/>
</dbReference>
<dbReference type="InterPro" id="IPR046758">
    <property type="entry name" value="Sey1/RHD3-like_3HB"/>
</dbReference>
<dbReference type="PANTHER" id="PTHR45923">
    <property type="entry name" value="PROTEIN SEY1"/>
    <property type="match status" value="1"/>
</dbReference>
<dbReference type="PANTHER" id="PTHR45923:SF2">
    <property type="entry name" value="PROTEIN SEY1"/>
    <property type="match status" value="1"/>
</dbReference>
<dbReference type="Pfam" id="PF05879">
    <property type="entry name" value="RHD3_GTPase"/>
    <property type="match status" value="1"/>
</dbReference>
<dbReference type="Pfam" id="PF20428">
    <property type="entry name" value="Sey1_3HB"/>
    <property type="match status" value="1"/>
</dbReference>
<dbReference type="SUPFAM" id="SSF52540">
    <property type="entry name" value="P-loop containing nucleoside triphosphate hydrolases"/>
    <property type="match status" value="1"/>
</dbReference>
<dbReference type="PROSITE" id="PS51715">
    <property type="entry name" value="G_GB1_RHD3"/>
    <property type="match status" value="1"/>
</dbReference>
<evidence type="ECO:0000255" key="1">
    <source>
        <dbReference type="HAMAP-Rule" id="MF_03109"/>
    </source>
</evidence>
<evidence type="ECO:0000255" key="2">
    <source>
        <dbReference type="PROSITE-ProRule" id="PRU01052"/>
    </source>
</evidence>
<evidence type="ECO:0000256" key="3">
    <source>
        <dbReference type="SAM" id="MobiDB-lite"/>
    </source>
</evidence>
<proteinExistence type="inferred from homology"/>